<gene>
    <name evidence="1" type="primary">mshC</name>
    <name type="ordered locus">Snas_4502</name>
</gene>
<reference key="1">
    <citation type="journal article" date="2009" name="Stand. Genomic Sci.">
        <title>Complete genome sequence of Stackebrandtia nassauensis type strain (LLR-40K-21).</title>
        <authorList>
            <person name="Munk C."/>
            <person name="Lapidus A."/>
            <person name="Copeland A."/>
            <person name="Jando M."/>
            <person name="Mayilraj S."/>
            <person name="Glavina Del Rio T."/>
            <person name="Nolan M."/>
            <person name="Chen F."/>
            <person name="Lucas S."/>
            <person name="Tice H."/>
            <person name="Cheng J.F."/>
            <person name="Han C."/>
            <person name="Detter J.C."/>
            <person name="Bruce D."/>
            <person name="Goodwin L."/>
            <person name="Chain P."/>
            <person name="Pitluck S."/>
            <person name="Goker M."/>
            <person name="Ovchinikova G."/>
            <person name="Pati A."/>
            <person name="Ivanova N."/>
            <person name="Mavromatis K."/>
            <person name="Chen A."/>
            <person name="Palaniappan K."/>
            <person name="Land M."/>
            <person name="Hauser L."/>
            <person name="Chang Y.J."/>
            <person name="Jeffries C.D."/>
            <person name="Bristow J."/>
            <person name="Eisen J.A."/>
            <person name="Markowitz V."/>
            <person name="Hugenholtz P."/>
            <person name="Kyrpides N.C."/>
            <person name="Klenk H.P."/>
        </authorList>
    </citation>
    <scope>NUCLEOTIDE SEQUENCE [LARGE SCALE GENOMIC DNA]</scope>
    <source>
        <strain>DSM 44728 / CIP 108903 / NRRL B-16338 / NBRC 102104 / LLR-40K-21</strain>
    </source>
</reference>
<comment type="function">
    <text evidence="1">Catalyzes the ATP-dependent condensation of GlcN-Ins and L-cysteine to form L-Cys-GlcN-Ins.</text>
</comment>
<comment type="catalytic activity">
    <reaction evidence="1">
        <text>1D-myo-inositol 2-amino-2-deoxy-alpha-D-glucopyranoside + L-cysteine + ATP = 1D-myo-inositol 2-(L-cysteinylamino)-2-deoxy-alpha-D-glucopyranoside + AMP + diphosphate + H(+)</text>
        <dbReference type="Rhea" id="RHEA:26176"/>
        <dbReference type="ChEBI" id="CHEBI:15378"/>
        <dbReference type="ChEBI" id="CHEBI:30616"/>
        <dbReference type="ChEBI" id="CHEBI:33019"/>
        <dbReference type="ChEBI" id="CHEBI:35235"/>
        <dbReference type="ChEBI" id="CHEBI:58886"/>
        <dbReference type="ChEBI" id="CHEBI:58887"/>
        <dbReference type="ChEBI" id="CHEBI:456215"/>
        <dbReference type="EC" id="6.3.1.13"/>
    </reaction>
</comment>
<comment type="cofactor">
    <cofactor evidence="1">
        <name>Zn(2+)</name>
        <dbReference type="ChEBI" id="CHEBI:29105"/>
    </cofactor>
    <text evidence="1">Binds 1 zinc ion per subunit.</text>
</comment>
<comment type="subunit">
    <text evidence="1">Monomer.</text>
</comment>
<comment type="similarity">
    <text evidence="1">Belongs to the class-I aminoacyl-tRNA synthetase family. MshC subfamily.</text>
</comment>
<organism>
    <name type="scientific">Stackebrandtia nassauensis (strain DSM 44728 / CIP 108903 / NRRL B-16338 / NBRC 102104 / LLR-40K-21)</name>
    <dbReference type="NCBI Taxonomy" id="446470"/>
    <lineage>
        <taxon>Bacteria</taxon>
        <taxon>Bacillati</taxon>
        <taxon>Actinomycetota</taxon>
        <taxon>Actinomycetes</taxon>
        <taxon>Glycomycetales</taxon>
        <taxon>Glycomycetaceae</taxon>
        <taxon>Stackebrandtia</taxon>
    </lineage>
</organism>
<keyword id="KW-0067">ATP-binding</keyword>
<keyword id="KW-0436">Ligase</keyword>
<keyword id="KW-0479">Metal-binding</keyword>
<keyword id="KW-0547">Nucleotide-binding</keyword>
<keyword id="KW-1185">Reference proteome</keyword>
<keyword id="KW-0862">Zinc</keyword>
<proteinExistence type="inferred from homology"/>
<name>MSHC_STANL</name>
<protein>
    <recommendedName>
        <fullName evidence="1">L-cysteine:1D-myo-inositol 2-amino-2-deoxy-alpha-D-glucopyranoside ligase</fullName>
        <shortName evidence="1">L-Cys:GlcN-Ins ligase</shortName>
        <ecNumber evidence="1">6.3.1.13</ecNumber>
    </recommendedName>
    <alternativeName>
        <fullName evidence="1">Mycothiol ligase</fullName>
        <shortName evidence="1">MSH ligase</shortName>
    </alternativeName>
</protein>
<feature type="chain" id="PRO_0000400485" description="L-cysteine:1D-myo-inositol 2-amino-2-deoxy-alpha-D-glucopyranoside ligase">
    <location>
        <begin position="1"/>
        <end position="431"/>
    </location>
</feature>
<feature type="short sequence motif" description="'HIGH' region" evidence="1">
    <location>
        <begin position="46"/>
        <end position="56"/>
    </location>
</feature>
<feature type="short sequence motif" description="'ERGGDP' region" evidence="1">
    <location>
        <begin position="187"/>
        <end position="192"/>
    </location>
</feature>
<feature type="short sequence motif" description="'KMSKS' region" evidence="1">
    <location>
        <begin position="289"/>
        <end position="293"/>
    </location>
</feature>
<feature type="binding site" evidence="1">
    <location>
        <begin position="44"/>
        <end position="47"/>
    </location>
    <ligand>
        <name>L-cysteinyl-5'-AMP</name>
        <dbReference type="ChEBI" id="CHEBI:144924"/>
    </ligand>
</feature>
<feature type="binding site" evidence="1">
    <location>
        <position position="44"/>
    </location>
    <ligand>
        <name>Zn(2+)</name>
        <dbReference type="ChEBI" id="CHEBI:29105"/>
    </ligand>
</feature>
<feature type="binding site" evidence="1">
    <location>
        <position position="59"/>
    </location>
    <ligand>
        <name>L-cysteinyl-5'-AMP</name>
        <dbReference type="ChEBI" id="CHEBI:144924"/>
    </ligand>
</feature>
<feature type="binding site" evidence="1">
    <location>
        <begin position="82"/>
        <end position="84"/>
    </location>
    <ligand>
        <name>L-cysteinyl-5'-AMP</name>
        <dbReference type="ChEBI" id="CHEBI:144924"/>
    </ligand>
</feature>
<feature type="binding site" evidence="1">
    <location>
        <position position="227"/>
    </location>
    <ligand>
        <name>L-cysteinyl-5'-AMP</name>
        <dbReference type="ChEBI" id="CHEBI:144924"/>
    </ligand>
</feature>
<feature type="binding site" evidence="1">
    <location>
        <position position="231"/>
    </location>
    <ligand>
        <name>Zn(2+)</name>
        <dbReference type="ChEBI" id="CHEBI:29105"/>
    </ligand>
</feature>
<feature type="binding site" evidence="1">
    <location>
        <begin position="249"/>
        <end position="251"/>
    </location>
    <ligand>
        <name>L-cysteinyl-5'-AMP</name>
        <dbReference type="ChEBI" id="CHEBI:144924"/>
    </ligand>
</feature>
<feature type="binding site" evidence="1">
    <location>
        <position position="256"/>
    </location>
    <ligand>
        <name>Zn(2+)</name>
        <dbReference type="ChEBI" id="CHEBI:29105"/>
    </ligand>
</feature>
<feature type="binding site" evidence="1">
    <location>
        <position position="283"/>
    </location>
    <ligand>
        <name>L-cysteinyl-5'-AMP</name>
        <dbReference type="ChEBI" id="CHEBI:144924"/>
    </ligand>
</feature>
<accession>D3Q598</accession>
<dbReference type="EC" id="6.3.1.13" evidence="1"/>
<dbReference type="EMBL" id="CP001778">
    <property type="protein sequence ID" value="ADD44147.1"/>
    <property type="molecule type" value="Genomic_DNA"/>
</dbReference>
<dbReference type="RefSeq" id="WP_013019718.1">
    <property type="nucleotide sequence ID" value="NC_013947.1"/>
</dbReference>
<dbReference type="SMR" id="D3Q598"/>
<dbReference type="STRING" id="446470.Snas_4502"/>
<dbReference type="KEGG" id="sna:Snas_4502"/>
<dbReference type="eggNOG" id="COG0215">
    <property type="taxonomic scope" value="Bacteria"/>
</dbReference>
<dbReference type="HOGENOM" id="CLU_013528_0_0_11"/>
<dbReference type="OrthoDB" id="9815130at2"/>
<dbReference type="Proteomes" id="UP000000844">
    <property type="component" value="Chromosome"/>
</dbReference>
<dbReference type="GO" id="GO:0005829">
    <property type="term" value="C:cytosol"/>
    <property type="evidence" value="ECO:0007669"/>
    <property type="project" value="TreeGrafter"/>
</dbReference>
<dbReference type="GO" id="GO:0005524">
    <property type="term" value="F:ATP binding"/>
    <property type="evidence" value="ECO:0007669"/>
    <property type="project" value="UniProtKB-KW"/>
</dbReference>
<dbReference type="GO" id="GO:0035446">
    <property type="term" value="F:cysteine-glucosaminylinositol ligase activity"/>
    <property type="evidence" value="ECO:0007669"/>
    <property type="project" value="UniProtKB-UniRule"/>
</dbReference>
<dbReference type="GO" id="GO:0004817">
    <property type="term" value="F:cysteine-tRNA ligase activity"/>
    <property type="evidence" value="ECO:0007669"/>
    <property type="project" value="TreeGrafter"/>
</dbReference>
<dbReference type="GO" id="GO:0008270">
    <property type="term" value="F:zinc ion binding"/>
    <property type="evidence" value="ECO:0007669"/>
    <property type="project" value="UniProtKB-UniRule"/>
</dbReference>
<dbReference type="GO" id="GO:0006423">
    <property type="term" value="P:cysteinyl-tRNA aminoacylation"/>
    <property type="evidence" value="ECO:0007669"/>
    <property type="project" value="TreeGrafter"/>
</dbReference>
<dbReference type="GO" id="GO:0010125">
    <property type="term" value="P:mycothiol biosynthetic process"/>
    <property type="evidence" value="ECO:0007669"/>
    <property type="project" value="UniProtKB-UniRule"/>
</dbReference>
<dbReference type="FunFam" id="3.40.50.620:FF:000134">
    <property type="entry name" value="L-cysteine:1D-myo-inositol 2-amino-2-deoxy-alpha-D-glucopyranoside ligase"/>
    <property type="match status" value="1"/>
</dbReference>
<dbReference type="Gene3D" id="1.20.120.640">
    <property type="entry name" value="Anticodon-binding domain of a subclass of class I aminoacyl-tRNA synthetases"/>
    <property type="match status" value="1"/>
</dbReference>
<dbReference type="Gene3D" id="3.40.50.620">
    <property type="entry name" value="HUPs"/>
    <property type="match status" value="1"/>
</dbReference>
<dbReference type="HAMAP" id="MF_01697">
    <property type="entry name" value="MshC"/>
    <property type="match status" value="1"/>
</dbReference>
<dbReference type="InterPro" id="IPR024909">
    <property type="entry name" value="Cys-tRNA/MSH_ligase"/>
</dbReference>
<dbReference type="InterPro" id="IPR017812">
    <property type="entry name" value="Mycothiol_ligase_MshC"/>
</dbReference>
<dbReference type="InterPro" id="IPR014729">
    <property type="entry name" value="Rossmann-like_a/b/a_fold"/>
</dbReference>
<dbReference type="InterPro" id="IPR032678">
    <property type="entry name" value="tRNA-synt_1_cat_dom"/>
</dbReference>
<dbReference type="NCBIfam" id="TIGR03447">
    <property type="entry name" value="mycothiol_MshC"/>
    <property type="match status" value="1"/>
</dbReference>
<dbReference type="PANTHER" id="PTHR10890:SF3">
    <property type="entry name" value="CYSTEINE--TRNA LIGASE, CYTOPLASMIC"/>
    <property type="match status" value="1"/>
</dbReference>
<dbReference type="PANTHER" id="PTHR10890">
    <property type="entry name" value="CYSTEINYL-TRNA SYNTHETASE"/>
    <property type="match status" value="1"/>
</dbReference>
<dbReference type="Pfam" id="PF01406">
    <property type="entry name" value="tRNA-synt_1e"/>
    <property type="match status" value="1"/>
</dbReference>
<dbReference type="PRINTS" id="PR00983">
    <property type="entry name" value="TRNASYNTHCYS"/>
</dbReference>
<dbReference type="SUPFAM" id="SSF52374">
    <property type="entry name" value="Nucleotidylyl transferase"/>
    <property type="match status" value="1"/>
</dbReference>
<evidence type="ECO:0000255" key="1">
    <source>
        <dbReference type="HAMAP-Rule" id="MF_01697"/>
    </source>
</evidence>
<sequence length="431" mass="47247">MESWQAPDLKRLGGQAVPLRLYDTARQAVHATEPHPDGARMYVCGITPYDATHLGHAATMVTFDVINRVWRDNGHDVAYVQNVTDVDEPLFERAERDGEDWVVLGMRETALFREDMEALSIIPPKAYVGAVESMPTIAALVERLVDAGAAYTVDDGTGDVYFPVTATEGFGSESHYDRDTMLRFFGERGGDPDRSGKRDPLDALLWRGEREGEPSWESRLGRGRPGWHIECAAIALAHLGDRIDVNGGGNDLIFPHHEFSAAHAEAATKAVPFAKHYVHAGMIGLDGEKMSKSRGNLVFVSRLRADGVDPAVIRLALLDGHYREDRPWTAELHAAAADRLARWREAMGMSSGASGTTTAQRVRERLSDDLDTPGALRAVDEWAAASLTGAHHDAHAPALVRDTVESLLGVTLLRAVFRQRTTSATTLDRSR</sequence>